<accession>B7NET9</accession>
<comment type="function">
    <text evidence="2">Involved in base excision repair of DNA damaged by oxidation or by mutagenic agents. Acts as a DNA glycosylase that recognizes and removes damaged bases. Has a preference for oxidized purines, such as 7,8-dihydro-8-oxoguanine (8-oxoG). Has AP (apurinic/apyrimidinic) lyase activity and introduces nicks in the DNA strand. Cleaves the DNA backbone by beta-delta elimination to generate a single-strand break at the site of the removed base with both 3'- and 5'-phosphates.</text>
</comment>
<comment type="catalytic activity">
    <reaction evidence="2">
        <text>Hydrolysis of DNA containing ring-opened 7-methylguanine residues, releasing 2,6-diamino-4-hydroxy-5-(N-methyl)formamidopyrimidine.</text>
        <dbReference type="EC" id="3.2.2.23"/>
    </reaction>
</comment>
<comment type="catalytic activity">
    <reaction evidence="2">
        <text>2'-deoxyribonucleotide-(2'-deoxyribose 5'-phosphate)-2'-deoxyribonucleotide-DNA = a 3'-end 2'-deoxyribonucleotide-(2,3-dehydro-2,3-deoxyribose 5'-phosphate)-DNA + a 5'-end 5'-phospho-2'-deoxyribonucleoside-DNA + H(+)</text>
        <dbReference type="Rhea" id="RHEA:66592"/>
        <dbReference type="Rhea" id="RHEA-COMP:13180"/>
        <dbReference type="Rhea" id="RHEA-COMP:16897"/>
        <dbReference type="Rhea" id="RHEA-COMP:17067"/>
        <dbReference type="ChEBI" id="CHEBI:15378"/>
        <dbReference type="ChEBI" id="CHEBI:136412"/>
        <dbReference type="ChEBI" id="CHEBI:157695"/>
        <dbReference type="ChEBI" id="CHEBI:167181"/>
        <dbReference type="EC" id="4.2.99.18"/>
    </reaction>
</comment>
<comment type="cofactor">
    <cofactor evidence="2">
        <name>Zn(2+)</name>
        <dbReference type="ChEBI" id="CHEBI:29105"/>
    </cofactor>
    <text evidence="2">Binds 1 zinc ion per subunit.</text>
</comment>
<comment type="subunit">
    <text evidence="2">Monomer.</text>
</comment>
<comment type="similarity">
    <text evidence="2">Belongs to the FPG family.</text>
</comment>
<gene>
    <name evidence="2" type="primary">mutM</name>
    <name evidence="2" type="synonym">fpg</name>
    <name type="ordered locus">ECUMN_4149</name>
</gene>
<name>FPG_ECOLU</name>
<proteinExistence type="inferred from homology"/>
<keyword id="KW-0227">DNA damage</keyword>
<keyword id="KW-0234">DNA repair</keyword>
<keyword id="KW-0238">DNA-binding</keyword>
<keyword id="KW-0326">Glycosidase</keyword>
<keyword id="KW-0378">Hydrolase</keyword>
<keyword id="KW-0456">Lyase</keyword>
<keyword id="KW-0479">Metal-binding</keyword>
<keyword id="KW-0511">Multifunctional enzyme</keyword>
<keyword id="KW-0862">Zinc</keyword>
<keyword id="KW-0863">Zinc-finger</keyword>
<dbReference type="EC" id="3.2.2.23" evidence="2"/>
<dbReference type="EC" id="4.2.99.18" evidence="2"/>
<dbReference type="EMBL" id="CU928163">
    <property type="protein sequence ID" value="CAR15290.1"/>
    <property type="molecule type" value="Genomic_DNA"/>
</dbReference>
<dbReference type="RefSeq" id="WP_001114533.1">
    <property type="nucleotide sequence ID" value="NC_011751.1"/>
</dbReference>
<dbReference type="RefSeq" id="YP_002414788.1">
    <property type="nucleotide sequence ID" value="NC_011751.1"/>
</dbReference>
<dbReference type="SMR" id="B7NET9"/>
<dbReference type="STRING" id="585056.ECUMN_4149"/>
<dbReference type="GeneID" id="93778348"/>
<dbReference type="KEGG" id="eum:ECUMN_4149"/>
<dbReference type="PATRIC" id="fig|585056.7.peg.4324"/>
<dbReference type="HOGENOM" id="CLU_038423_1_1_6"/>
<dbReference type="Proteomes" id="UP000007097">
    <property type="component" value="Chromosome"/>
</dbReference>
<dbReference type="GO" id="GO:0034039">
    <property type="term" value="F:8-oxo-7,8-dihydroguanine DNA N-glycosylase activity"/>
    <property type="evidence" value="ECO:0007669"/>
    <property type="project" value="TreeGrafter"/>
</dbReference>
<dbReference type="GO" id="GO:0140078">
    <property type="term" value="F:class I DNA-(apurinic or apyrimidinic site) endonuclease activity"/>
    <property type="evidence" value="ECO:0007669"/>
    <property type="project" value="UniProtKB-EC"/>
</dbReference>
<dbReference type="GO" id="GO:0003684">
    <property type="term" value="F:damaged DNA binding"/>
    <property type="evidence" value="ECO:0007669"/>
    <property type="project" value="InterPro"/>
</dbReference>
<dbReference type="GO" id="GO:0008270">
    <property type="term" value="F:zinc ion binding"/>
    <property type="evidence" value="ECO:0007669"/>
    <property type="project" value="UniProtKB-UniRule"/>
</dbReference>
<dbReference type="GO" id="GO:0006284">
    <property type="term" value="P:base-excision repair"/>
    <property type="evidence" value="ECO:0007669"/>
    <property type="project" value="InterPro"/>
</dbReference>
<dbReference type="CDD" id="cd08966">
    <property type="entry name" value="EcFpg-like_N"/>
    <property type="match status" value="1"/>
</dbReference>
<dbReference type="FunFam" id="1.10.8.50:FF:000003">
    <property type="entry name" value="Formamidopyrimidine-DNA glycosylase"/>
    <property type="match status" value="1"/>
</dbReference>
<dbReference type="FunFam" id="3.20.190.10:FF:000001">
    <property type="entry name" value="Formamidopyrimidine-DNA glycosylase"/>
    <property type="match status" value="1"/>
</dbReference>
<dbReference type="Gene3D" id="1.10.8.50">
    <property type="match status" value="1"/>
</dbReference>
<dbReference type="Gene3D" id="3.20.190.10">
    <property type="entry name" value="MutM-like, N-terminal"/>
    <property type="match status" value="1"/>
</dbReference>
<dbReference type="HAMAP" id="MF_00103">
    <property type="entry name" value="Fapy_DNA_glycosyl"/>
    <property type="match status" value="1"/>
</dbReference>
<dbReference type="InterPro" id="IPR015886">
    <property type="entry name" value="DNA_glyclase/AP_lyase_DNA-bd"/>
</dbReference>
<dbReference type="InterPro" id="IPR015887">
    <property type="entry name" value="DNA_glyclase_Znf_dom_DNA_BS"/>
</dbReference>
<dbReference type="InterPro" id="IPR020629">
    <property type="entry name" value="Formamido-pyr_DNA_Glyclase"/>
</dbReference>
<dbReference type="InterPro" id="IPR012319">
    <property type="entry name" value="FPG_cat"/>
</dbReference>
<dbReference type="InterPro" id="IPR035937">
    <property type="entry name" value="MutM-like_N-ter"/>
</dbReference>
<dbReference type="InterPro" id="IPR010979">
    <property type="entry name" value="Ribosomal_uS13-like_H2TH"/>
</dbReference>
<dbReference type="InterPro" id="IPR000214">
    <property type="entry name" value="Znf_DNA_glyclase/AP_lyase"/>
</dbReference>
<dbReference type="InterPro" id="IPR010663">
    <property type="entry name" value="Znf_FPG/IleRS"/>
</dbReference>
<dbReference type="NCBIfam" id="TIGR00577">
    <property type="entry name" value="fpg"/>
    <property type="match status" value="1"/>
</dbReference>
<dbReference type="NCBIfam" id="NF002211">
    <property type="entry name" value="PRK01103.1"/>
    <property type="match status" value="1"/>
</dbReference>
<dbReference type="PANTHER" id="PTHR22993">
    <property type="entry name" value="FORMAMIDOPYRIMIDINE-DNA GLYCOSYLASE"/>
    <property type="match status" value="1"/>
</dbReference>
<dbReference type="PANTHER" id="PTHR22993:SF9">
    <property type="entry name" value="FORMAMIDOPYRIMIDINE-DNA GLYCOSYLASE"/>
    <property type="match status" value="1"/>
</dbReference>
<dbReference type="Pfam" id="PF01149">
    <property type="entry name" value="Fapy_DNA_glyco"/>
    <property type="match status" value="1"/>
</dbReference>
<dbReference type="Pfam" id="PF06831">
    <property type="entry name" value="H2TH"/>
    <property type="match status" value="1"/>
</dbReference>
<dbReference type="Pfam" id="PF06827">
    <property type="entry name" value="zf-FPG_IleRS"/>
    <property type="match status" value="1"/>
</dbReference>
<dbReference type="SMART" id="SM00898">
    <property type="entry name" value="Fapy_DNA_glyco"/>
    <property type="match status" value="1"/>
</dbReference>
<dbReference type="SMART" id="SM01232">
    <property type="entry name" value="H2TH"/>
    <property type="match status" value="1"/>
</dbReference>
<dbReference type="SUPFAM" id="SSF57716">
    <property type="entry name" value="Glucocorticoid receptor-like (DNA-binding domain)"/>
    <property type="match status" value="1"/>
</dbReference>
<dbReference type="SUPFAM" id="SSF81624">
    <property type="entry name" value="N-terminal domain of MutM-like DNA repair proteins"/>
    <property type="match status" value="1"/>
</dbReference>
<dbReference type="SUPFAM" id="SSF46946">
    <property type="entry name" value="S13-like H2TH domain"/>
    <property type="match status" value="1"/>
</dbReference>
<dbReference type="PROSITE" id="PS51068">
    <property type="entry name" value="FPG_CAT"/>
    <property type="match status" value="1"/>
</dbReference>
<dbReference type="PROSITE" id="PS01242">
    <property type="entry name" value="ZF_FPG_1"/>
    <property type="match status" value="1"/>
</dbReference>
<dbReference type="PROSITE" id="PS51066">
    <property type="entry name" value="ZF_FPG_2"/>
    <property type="match status" value="1"/>
</dbReference>
<reference key="1">
    <citation type="journal article" date="2009" name="PLoS Genet.">
        <title>Organised genome dynamics in the Escherichia coli species results in highly diverse adaptive paths.</title>
        <authorList>
            <person name="Touchon M."/>
            <person name="Hoede C."/>
            <person name="Tenaillon O."/>
            <person name="Barbe V."/>
            <person name="Baeriswyl S."/>
            <person name="Bidet P."/>
            <person name="Bingen E."/>
            <person name="Bonacorsi S."/>
            <person name="Bouchier C."/>
            <person name="Bouvet O."/>
            <person name="Calteau A."/>
            <person name="Chiapello H."/>
            <person name="Clermont O."/>
            <person name="Cruveiller S."/>
            <person name="Danchin A."/>
            <person name="Diard M."/>
            <person name="Dossat C."/>
            <person name="Karoui M.E."/>
            <person name="Frapy E."/>
            <person name="Garry L."/>
            <person name="Ghigo J.M."/>
            <person name="Gilles A.M."/>
            <person name="Johnson J."/>
            <person name="Le Bouguenec C."/>
            <person name="Lescat M."/>
            <person name="Mangenot S."/>
            <person name="Martinez-Jehanne V."/>
            <person name="Matic I."/>
            <person name="Nassif X."/>
            <person name="Oztas S."/>
            <person name="Petit M.A."/>
            <person name="Pichon C."/>
            <person name="Rouy Z."/>
            <person name="Ruf C.S."/>
            <person name="Schneider D."/>
            <person name="Tourret J."/>
            <person name="Vacherie B."/>
            <person name="Vallenet D."/>
            <person name="Medigue C."/>
            <person name="Rocha E.P.C."/>
            <person name="Denamur E."/>
        </authorList>
    </citation>
    <scope>NUCLEOTIDE SEQUENCE [LARGE SCALE GENOMIC DNA]</scope>
    <source>
        <strain>UMN026 / ExPEC</strain>
    </source>
</reference>
<protein>
    <recommendedName>
        <fullName evidence="2">Formamidopyrimidine-DNA glycosylase</fullName>
        <shortName evidence="2">Fapy-DNA glycosylase</shortName>
        <ecNumber evidence="2">3.2.2.23</ecNumber>
    </recommendedName>
    <alternativeName>
        <fullName evidence="2">DNA-(apurinic or apyrimidinic site) lyase MutM</fullName>
        <shortName evidence="2">AP lyase MutM</shortName>
        <ecNumber evidence="2">4.2.99.18</ecNumber>
    </alternativeName>
</protein>
<evidence type="ECO:0000250" key="1"/>
<evidence type="ECO:0000255" key="2">
    <source>
        <dbReference type="HAMAP-Rule" id="MF_00103"/>
    </source>
</evidence>
<feature type="initiator methionine" description="Removed" evidence="1">
    <location>
        <position position="1"/>
    </location>
</feature>
<feature type="chain" id="PRO_1000117383" description="Formamidopyrimidine-DNA glycosylase">
    <location>
        <begin position="2"/>
        <end position="269"/>
    </location>
</feature>
<feature type="zinc finger region" description="FPG-type" evidence="2">
    <location>
        <begin position="235"/>
        <end position="269"/>
    </location>
</feature>
<feature type="active site" description="Schiff-base intermediate with DNA" evidence="2">
    <location>
        <position position="2"/>
    </location>
</feature>
<feature type="active site" description="Proton donor" evidence="2">
    <location>
        <position position="3"/>
    </location>
</feature>
<feature type="active site" description="Proton donor; for beta-elimination activity" evidence="2">
    <location>
        <position position="57"/>
    </location>
</feature>
<feature type="active site" description="Proton donor; for delta-elimination activity" evidence="2">
    <location>
        <position position="259"/>
    </location>
</feature>
<feature type="binding site" evidence="2">
    <location>
        <position position="90"/>
    </location>
    <ligand>
        <name>DNA</name>
        <dbReference type="ChEBI" id="CHEBI:16991"/>
    </ligand>
</feature>
<feature type="binding site" evidence="2">
    <location>
        <position position="109"/>
    </location>
    <ligand>
        <name>DNA</name>
        <dbReference type="ChEBI" id="CHEBI:16991"/>
    </ligand>
</feature>
<feature type="binding site" evidence="2">
    <location>
        <position position="150"/>
    </location>
    <ligand>
        <name>DNA</name>
        <dbReference type="ChEBI" id="CHEBI:16991"/>
    </ligand>
</feature>
<organism>
    <name type="scientific">Escherichia coli O17:K52:H18 (strain UMN026 / ExPEC)</name>
    <dbReference type="NCBI Taxonomy" id="585056"/>
    <lineage>
        <taxon>Bacteria</taxon>
        <taxon>Pseudomonadati</taxon>
        <taxon>Pseudomonadota</taxon>
        <taxon>Gammaproteobacteria</taxon>
        <taxon>Enterobacterales</taxon>
        <taxon>Enterobacteriaceae</taxon>
        <taxon>Escherichia</taxon>
    </lineage>
</organism>
<sequence length="269" mass="30260">MPELPEVETSRRGIEPHLVGATILHAVVRNGRLRWPVSEEIYRLSDQPVLSVQRRAKYLLLELPEGWIIIHLGMSGSLRILPEELPPEKHDHVDLVMSNGKVLRYTDPRRFGAWLWTKELEGHNVLAHLGPEPLSDDFNGEYLHQKCAKKKTAIKPWLMDNKLVVGVGNIYASESLFAAGIHPDRLASSLSLAECELLARVIKAVLLRSIEQGGTTLKDFLQSDGKPGYFAQELQVYGRKGEPCRVCGTPIVATKHAQRATFYCRQCQK</sequence>